<accession>P19836</accession>
<reference key="1">
    <citation type="journal article" date="1990" name="Proc. Natl. Acad. Sci. U.S.A.">
        <title>Cloning and expression of rat liver CTP:phosphocholine cytidylyltransferase: an amphipathic protein that controls phosphatidylcholine synthesis.</title>
        <authorList>
            <person name="Kalmar G.B."/>
            <person name="Kay R.J."/>
            <person name="Lachance A."/>
            <person name="Aebersold R."/>
            <person name="Cornell R.B."/>
        </authorList>
    </citation>
    <scope>NUCLEOTIDE SEQUENCE [MRNA]</scope>
    <scope>PARTIAL PROTEIN SEQUENCE</scope>
    <scope>FUNCTION</scope>
    <scope>CATALYTIC ACTIVITY</scope>
    <source>
        <strain>Sprague-Dawley</strain>
        <tissue>Liver</tissue>
    </source>
</reference>
<reference key="2">
    <citation type="submission" date="1993-11" db="EMBL/GenBank/DDBJ databases">
        <authorList>
            <person name="Hogan M."/>
            <person name="Zimmermann L.J."/>
            <person name="Wang J."/>
            <person name="Kuliszewski M."/>
            <person name="Liu J."/>
            <person name="Buch S."/>
            <person name="Post M."/>
        </authorList>
    </citation>
    <scope>NUCLEOTIDE SEQUENCE [MRNA]</scope>
    <source>
        <strain>Wistar</strain>
        <tissue>Lung</tissue>
    </source>
</reference>
<reference key="3">
    <citation type="journal article" date="1993" name="Protein Expr. Purif.">
        <title>Baculovirus-mediated expression of rat liver CTP:phosphocholine cytidylyltransferase.</title>
        <authorList>
            <person name="Macdonald J.I.S."/>
            <person name="Kent C."/>
        </authorList>
    </citation>
    <scope>NUCLEOTIDE SEQUENCE [MRNA]</scope>
    <scope>FUNCTION</scope>
    <scope>CATALYTIC ACTIVITY</scope>
    <scope>ACTIVITY REGULATION</scope>
</reference>
<reference key="4">
    <citation type="journal article" date="2004" name="Genome Res.">
        <title>The status, quality, and expansion of the NIH full-length cDNA project: the Mammalian Gene Collection (MGC).</title>
        <authorList>
            <consortium name="The MGC Project Team"/>
        </authorList>
    </citation>
    <scope>NUCLEOTIDE SEQUENCE [LARGE SCALE MRNA]</scope>
    <source>
        <tissue>Kidney</tissue>
    </source>
</reference>
<reference key="5">
    <citation type="journal article" date="1978" name="Eur. J. Biochem.">
        <title>Immunological studies on CTP:phosphocholine cytidylyltransferase from the livers of normal and choline-deficient rats.</title>
        <authorList>
            <person name="Choy P.C."/>
            <person name="Schneider W.J."/>
            <person name="Vance D.E."/>
        </authorList>
    </citation>
    <scope>FUNCTION</scope>
    <scope>CATALYTIC ACTIVITY</scope>
    <scope>SUBCELLULAR LOCATION</scope>
</reference>
<reference key="6">
    <citation type="journal article" date="1994" name="Arch. Biochem. Biophys.">
        <title>Expression of wild-type and mutant rat liver CTP: phosphocholine cytidylyltransferase in a cytidylyltransferase-deficient Chinese hamster ovary cell line.</title>
        <authorList>
            <person name="Sweitzer T.D."/>
            <person name="Kent C."/>
        </authorList>
    </citation>
    <scope>FUNCTION</scope>
    <scope>CATALYTIC ACTIVITY</scope>
    <scope>PHOSPHORYLATION</scope>
    <scope>SUBCELLULAR LOCATION</scope>
    <scope>BIOPHYSICOCHEMICAL PROPERTIES</scope>
    <scope>ACTIVITY REGULATION</scope>
    <scope>MUTAGENESIS OF SER-362</scope>
</reference>
<reference key="7">
    <citation type="journal article" date="1994" name="J. Biol. Chem.">
        <title>Identification of phosphorylation sites in rat liver CTP: phosphocholine cytidylyltransferase.</title>
        <authorList>
            <person name="McDonald J.I.S."/>
            <person name="Kent C."/>
        </authorList>
    </citation>
    <scope>PHOSPHORYLATION AT SER-315; SER-319; SER-321; SER-322; SER-323; SER-329; SER-331; SER-333; SER-343; SER-345; SER-346; SER-347; SER-350; SER-352 AND SER-362</scope>
    <source>
        <tissue>Liver</tissue>
    </source>
</reference>
<reference key="8">
    <citation type="journal article" date="2003" name="Biochemistry">
        <title>Identification of lysine 122 and arginine 196 as important functional residues of rat CTP:phosphocholine cytidylyltransferase alpha.</title>
        <authorList>
            <person name="Helmink B.A."/>
            <person name="Braker J.D."/>
            <person name="Kent C."/>
            <person name="Friesen J.A."/>
        </authorList>
    </citation>
    <scope>FUNCTION</scope>
    <scope>CATALYTIC ACTIVITY</scope>
    <scope>MUTAGENESIS OF LYS-122</scope>
</reference>
<reference key="9">
    <citation type="journal article" date="2012" name="Nat. Commun.">
        <title>Quantitative maps of protein phosphorylation sites across 14 different rat organs and tissues.</title>
        <authorList>
            <person name="Lundby A."/>
            <person name="Secher A."/>
            <person name="Lage K."/>
            <person name="Nordsborg N.B."/>
            <person name="Dmytriyev A."/>
            <person name="Lundby C."/>
            <person name="Olsen J.V."/>
        </authorList>
    </citation>
    <scope>PHOSPHORYLATION [LARGE SCALE ANALYSIS] AT SER-319; SER-331; THR-342; SER-347 AND SER-362</scope>
    <scope>IDENTIFICATION BY MASS SPECTROMETRY [LARGE SCALE ANALYSIS]</scope>
</reference>
<reference key="10">
    <citation type="journal article" date="1996" name="Biochemistry">
        <title>Structure of the membrane binding domain of CTP:phosphocholine cytidylyltransferase.</title>
        <authorList>
            <person name="Dunne S.J."/>
            <person name="Cornell R.B."/>
            <person name="Johnson J.E."/>
            <person name="Glover N.R."/>
            <person name="Tracey A.S."/>
        </authorList>
    </citation>
    <scope>STRUCTURE BY NMR OF 236-268</scope>
    <source>
        <tissue>Liver</tissue>
    </source>
</reference>
<reference key="11">
    <citation type="journal article" date="2009" name="J. Biol. Chem.">
        <title>Crystal structure of a mammalian CTP: phosphocholine cytidylyltransferase catalytic domain reveals novel active site residues within a highly conserved nucleotidyltransferase fold.</title>
        <authorList>
            <person name="Lee J."/>
            <person name="Johnson J."/>
            <person name="Ding Z."/>
            <person name="Paetzel M."/>
            <person name="Cornell R.B."/>
        </authorList>
    </citation>
    <scope>X-RAY CRYSTALLOGRAPHY (2.20 ANGSTROMS) OF 1-236 IN COMPLEX WITH CDP-CHOLINE</scope>
    <scope>FUNCTION</scope>
    <scope>CATALYTIC ACTIVITY</scope>
    <scope>MUTAGENESIS OF HIS-168 AND TYR-173</scope>
    <scope>SUBUNIT</scope>
    <scope>IDENTIFICATION BY MASS SPECTROMETRY</scope>
</reference>
<reference evidence="16 17" key="12">
    <citation type="journal article" date="2014" name="J. Biol. Chem.">
        <title>Structural basis for autoinhibition of CTP:phosphocholine cytidylyltransferase (CCT), the regulatory enzyme in phosphatidylcholine synthesis, by its membrane-binding amphipathic helix.</title>
        <authorList>
            <person name="Lee J."/>
            <person name="Taneva S.G."/>
            <person name="Holland B.W."/>
            <person name="Tieleman D.P."/>
            <person name="Cornell R.B."/>
        </authorList>
    </citation>
    <scope>X-RAY CRYSTALLOGRAPHY (3.00 ANGSTROMS) OF 1-312 IN COMPLEX WITH CDP-CHOLINE</scope>
    <scope>FUNCTION</scope>
    <scope>CATALYTIC ACTIVITY</scope>
    <scope>PATHWAY</scope>
    <scope>SUBUNIT</scope>
    <scope>ACTIVITY REGULATION</scope>
</reference>
<comment type="function">
    <text evidence="4 5 6 7 8 10 11">Catalyzes the key rate-limiting step in the CDP-choline pathway for phosphatidylcholine biosynthesis.</text>
</comment>
<comment type="catalytic activity">
    <reaction evidence="4 5 6 7 8 10 11">
        <text>phosphocholine + CTP + H(+) = CDP-choline + diphosphate</text>
        <dbReference type="Rhea" id="RHEA:18997"/>
        <dbReference type="ChEBI" id="CHEBI:15378"/>
        <dbReference type="ChEBI" id="CHEBI:33019"/>
        <dbReference type="ChEBI" id="CHEBI:37563"/>
        <dbReference type="ChEBI" id="CHEBI:58779"/>
        <dbReference type="ChEBI" id="CHEBI:295975"/>
        <dbReference type="EC" id="2.7.7.15"/>
    </reaction>
    <physiologicalReaction direction="left-to-right" evidence="13 14">
        <dbReference type="Rhea" id="RHEA:18998"/>
    </physiologicalReaction>
</comment>
<comment type="activity regulation">
    <text evidence="7 10 11">Interconverts between an inactive cytosolic form and an active membrane-bound form (PubMed:24275660). Activation involves disruption of an inhibitory interaction between helices at the base of the active site and the autoinhibitory (AI) region (PubMed:24275660). Activated by N-methylethanolamine (PubMed:8185307). Activated by oleic acid-containing phosphatidylcholine vesicles (PubMed:8381041).</text>
</comment>
<comment type="biophysicochemical properties">
    <kinetics>
        <KM evidence="10">0.41 uM for CTP</KM>
        <KM evidence="10">0.47 uM for phosphocholine</KM>
    </kinetics>
</comment>
<comment type="pathway">
    <text evidence="4 5 6 7 8 10 11">Phospholipid metabolism; phosphatidylcholine biosynthesis; phosphatidylcholine from phosphocholine: step 1/2.</text>
</comment>
<comment type="subunit">
    <text evidence="5 7">Homodimer.</text>
</comment>
<comment type="subcellular location">
    <subcellularLocation>
        <location evidence="8">Cytoplasm</location>
        <location evidence="8">Cytosol</location>
    </subcellularLocation>
    <subcellularLocation>
        <location evidence="7 8">Membrane</location>
        <topology evidence="8">Peripheral membrane protein</topology>
    </subcellularLocation>
    <subcellularLocation>
        <location evidence="1">Endoplasmic reticulum membrane</location>
        <topology evidence="8">Peripheral membrane protein</topology>
    </subcellularLocation>
    <subcellularLocation>
        <location evidence="10">Nucleus</location>
    </subcellularLocation>
    <text evidence="7">It can interconvert between an inactive cytosolic form and an active membrane-bound form.</text>
</comment>
<comment type="PTM">
    <text evidence="9">The serine residues of the C-terminus are phosphorylated. The inactive soluble form is stabilized by phosphorylation, the active membrane bound form is promoted by anionic lipids or diacylglycerol, and is stabilized by dephosphorylation.</text>
</comment>
<comment type="PTM">
    <text evidence="6">The N-terminus is blocked.</text>
</comment>
<comment type="PTM">
    <text evidence="2">Monoubiquitinated by the SCF(FBXL2) complex, leading to proteasomal degradation.</text>
</comment>
<comment type="miscellaneous">
    <text>The cytidylyltransferase may interact with membranes through its amphipathic helix.</text>
</comment>
<comment type="similarity">
    <text evidence="12">Belongs to the cytidylyltransferase family.</text>
</comment>
<gene>
    <name type="primary">Pcyt1a</name>
    <name type="synonym">Ctpct</name>
    <name type="synonym">Pcyt1</name>
</gene>
<evidence type="ECO:0000250" key="1">
    <source>
        <dbReference type="UniProtKB" id="P49585"/>
    </source>
</evidence>
<evidence type="ECO:0000250" key="2">
    <source>
        <dbReference type="UniProtKB" id="P49586"/>
    </source>
</evidence>
<evidence type="ECO:0000256" key="3">
    <source>
        <dbReference type="SAM" id="MobiDB-lite"/>
    </source>
</evidence>
<evidence type="ECO:0000269" key="4">
    <source>
    </source>
</evidence>
<evidence type="ECO:0000269" key="5">
    <source>
    </source>
</evidence>
<evidence type="ECO:0000269" key="6">
    <source>
    </source>
</evidence>
<evidence type="ECO:0000269" key="7">
    <source>
    </source>
</evidence>
<evidence type="ECO:0000269" key="8">
    <source>
    </source>
</evidence>
<evidence type="ECO:0000269" key="9">
    <source>
    </source>
</evidence>
<evidence type="ECO:0000269" key="10">
    <source>
    </source>
</evidence>
<evidence type="ECO:0000269" key="11">
    <source>
    </source>
</evidence>
<evidence type="ECO:0000305" key="12"/>
<evidence type="ECO:0000305" key="13">
    <source>
    </source>
</evidence>
<evidence type="ECO:0000305" key="14">
    <source>
    </source>
</evidence>
<evidence type="ECO:0007744" key="15">
    <source>
        <dbReference type="PDB" id="3HL4"/>
    </source>
</evidence>
<evidence type="ECO:0007744" key="16">
    <source>
        <dbReference type="PDB" id="4MVC"/>
    </source>
</evidence>
<evidence type="ECO:0007744" key="17">
    <source>
        <dbReference type="PDB" id="4MVD"/>
    </source>
</evidence>
<evidence type="ECO:0007744" key="18">
    <source>
    </source>
</evidence>
<evidence type="ECO:0007829" key="19">
    <source>
        <dbReference type="PDB" id="1PEH"/>
    </source>
</evidence>
<evidence type="ECO:0007829" key="20">
    <source>
        <dbReference type="PDB" id="1PEI"/>
    </source>
</evidence>
<evidence type="ECO:0007829" key="21">
    <source>
        <dbReference type="PDB" id="3HL4"/>
    </source>
</evidence>
<evidence type="ECO:0007829" key="22">
    <source>
        <dbReference type="PDB" id="4MVC"/>
    </source>
</evidence>
<sequence length="367" mass="41681">MDAQSSAKVNSRKRRKEVPGPNGATEEDGIPSKVQRCAVGLRQPAPFSDEIEVDFSKPYVRVTMEEACRGTPCERPVRVYADGIFDLFHSGHARALMQAKNLFPNTYLIVGVCSDELTHNFKGFTVMNENERYDAVQHCRYVDEVVRNAPWTLTPEFLAEHRIDFVAHDDIPYSSAGSDDVYKHIKEAGMFAPTQRTEGISTSDIITRIVRDYDVYARRNLQRGYTAKELNVSFINEKKYHLQERVDKVKKKVKDVEEKSKEFVQKVEEKSIDLIQKWEEKSREFIGSFLEMFGPEGALKHMLKEGKGRMLQAISPKQSPSSSPTHERSPSPSFRWPFSGKTSPSSSPASLSRCKAVTCDISEDEED</sequence>
<proteinExistence type="evidence at protein level"/>
<keyword id="KW-0002">3D-structure</keyword>
<keyword id="KW-0007">Acetylation</keyword>
<keyword id="KW-0963">Cytoplasm</keyword>
<keyword id="KW-0903">Direct protein sequencing</keyword>
<keyword id="KW-0256">Endoplasmic reticulum</keyword>
<keyword id="KW-0444">Lipid biosynthesis</keyword>
<keyword id="KW-0443">Lipid metabolism</keyword>
<keyword id="KW-0472">Membrane</keyword>
<keyword id="KW-0548">Nucleotidyltransferase</keyword>
<keyword id="KW-0539">Nucleus</keyword>
<keyword id="KW-0594">Phospholipid biosynthesis</keyword>
<keyword id="KW-1208">Phospholipid metabolism</keyword>
<keyword id="KW-0597">Phosphoprotein</keyword>
<keyword id="KW-1185">Reference proteome</keyword>
<keyword id="KW-0677">Repeat</keyword>
<keyword id="KW-0808">Transferase</keyword>
<keyword id="KW-0832">Ubl conjugation</keyword>
<name>PCY1A_RAT</name>
<organism>
    <name type="scientific">Rattus norvegicus</name>
    <name type="common">Rat</name>
    <dbReference type="NCBI Taxonomy" id="10116"/>
    <lineage>
        <taxon>Eukaryota</taxon>
        <taxon>Metazoa</taxon>
        <taxon>Chordata</taxon>
        <taxon>Craniata</taxon>
        <taxon>Vertebrata</taxon>
        <taxon>Euteleostomi</taxon>
        <taxon>Mammalia</taxon>
        <taxon>Eutheria</taxon>
        <taxon>Euarchontoglires</taxon>
        <taxon>Glires</taxon>
        <taxon>Rodentia</taxon>
        <taxon>Myomorpha</taxon>
        <taxon>Muroidea</taxon>
        <taxon>Muridae</taxon>
        <taxon>Murinae</taxon>
        <taxon>Rattus</taxon>
    </lineage>
</organism>
<dbReference type="EC" id="2.7.7.15" evidence="4 5 6 7 8 10 11"/>
<dbReference type="EMBL" id="M36071">
    <property type="protein sequence ID" value="AAA40995.1"/>
    <property type="molecule type" value="mRNA"/>
</dbReference>
<dbReference type="EMBL" id="U03490">
    <property type="protein sequence ID" value="AAB60489.1"/>
    <property type="molecule type" value="mRNA"/>
</dbReference>
<dbReference type="EMBL" id="L13245">
    <property type="protein sequence ID" value="AAB59683.1"/>
    <property type="molecule type" value="mRNA"/>
</dbReference>
<dbReference type="EMBL" id="BC085713">
    <property type="protein sequence ID" value="AAH85713.1"/>
    <property type="molecule type" value="mRNA"/>
</dbReference>
<dbReference type="PIR" id="A36001">
    <property type="entry name" value="A36001"/>
</dbReference>
<dbReference type="RefSeq" id="NP_511177.2">
    <property type="nucleotide sequence ID" value="NM_078622.2"/>
</dbReference>
<dbReference type="RefSeq" id="XP_006248506.1">
    <property type="nucleotide sequence ID" value="XM_006248444.5"/>
</dbReference>
<dbReference type="RefSeq" id="XP_008766916.1">
    <property type="nucleotide sequence ID" value="XM_008768694.4"/>
</dbReference>
<dbReference type="RefSeq" id="XP_038943847.1">
    <property type="nucleotide sequence ID" value="XM_039087919.2"/>
</dbReference>
<dbReference type="PDB" id="1PEH">
    <property type="method" value="NMR"/>
    <property type="chains" value="A=236-268"/>
</dbReference>
<dbReference type="PDB" id="1PEI">
    <property type="method" value="NMR"/>
    <property type="chains" value="A=267-288"/>
</dbReference>
<dbReference type="PDB" id="3HL4">
    <property type="method" value="X-ray"/>
    <property type="resolution" value="2.20 A"/>
    <property type="chains" value="A/B=1-236"/>
</dbReference>
<dbReference type="PDB" id="4MVC">
    <property type="method" value="X-ray"/>
    <property type="resolution" value="3.00 A"/>
    <property type="chains" value="A/B=1-312"/>
</dbReference>
<dbReference type="PDB" id="4MVD">
    <property type="method" value="X-ray"/>
    <property type="resolution" value="8.00 A"/>
    <property type="chains" value="A/B/C/D/E/F/G/H=1-312"/>
</dbReference>
<dbReference type="PDBsum" id="1PEH"/>
<dbReference type="PDBsum" id="1PEI"/>
<dbReference type="PDBsum" id="3HL4"/>
<dbReference type="PDBsum" id="4MVC"/>
<dbReference type="PDBsum" id="4MVD"/>
<dbReference type="SMR" id="P19836"/>
<dbReference type="FunCoup" id="P19836">
    <property type="interactions" value="2273"/>
</dbReference>
<dbReference type="STRING" id="10116.ENSRNOP00000002403"/>
<dbReference type="SwissLipids" id="SLP:000001188"/>
<dbReference type="iPTMnet" id="P19836"/>
<dbReference type="PhosphoSitePlus" id="P19836"/>
<dbReference type="jPOST" id="P19836"/>
<dbReference type="PaxDb" id="10116-ENSRNOP00000002403"/>
<dbReference type="Ensembl" id="ENSRNOT00000002403.4">
    <property type="protein sequence ID" value="ENSRNOP00000002403.3"/>
    <property type="gene ID" value="ENSRNOG00000001762.4"/>
</dbReference>
<dbReference type="GeneID" id="140544"/>
<dbReference type="KEGG" id="rno:140544"/>
<dbReference type="UCSC" id="RGD:70515">
    <property type="organism name" value="rat"/>
</dbReference>
<dbReference type="AGR" id="RGD:70515"/>
<dbReference type="CTD" id="5130"/>
<dbReference type="RGD" id="70515">
    <property type="gene designation" value="Pcyt1a"/>
</dbReference>
<dbReference type="eggNOG" id="KOG2804">
    <property type="taxonomic scope" value="Eukaryota"/>
</dbReference>
<dbReference type="GeneTree" id="ENSGT00940000157384"/>
<dbReference type="HOGENOM" id="CLU_034585_4_2_1"/>
<dbReference type="InParanoid" id="P19836"/>
<dbReference type="OMA" id="IWRESKG"/>
<dbReference type="OrthoDB" id="17102at2759"/>
<dbReference type="PhylomeDB" id="P19836"/>
<dbReference type="TreeFam" id="TF106336"/>
<dbReference type="BRENDA" id="2.7.7.15">
    <property type="organism ID" value="5301"/>
</dbReference>
<dbReference type="Reactome" id="R-RNO-1483191">
    <property type="pathway name" value="Synthesis of PC"/>
</dbReference>
<dbReference type="UniPathway" id="UPA00753">
    <property type="reaction ID" value="UER00739"/>
</dbReference>
<dbReference type="EvolutionaryTrace" id="P19836"/>
<dbReference type="PRO" id="PR:P19836"/>
<dbReference type="Proteomes" id="UP000002494">
    <property type="component" value="Chromosome 11"/>
</dbReference>
<dbReference type="Bgee" id="ENSRNOG00000001762">
    <property type="expression patterns" value="Expressed in skeletal muscle tissue and 19 other cell types or tissues"/>
</dbReference>
<dbReference type="GO" id="GO:0005829">
    <property type="term" value="C:cytosol"/>
    <property type="evidence" value="ECO:0007669"/>
    <property type="project" value="UniProtKB-SubCell"/>
</dbReference>
<dbReference type="GO" id="GO:0005783">
    <property type="term" value="C:endoplasmic reticulum"/>
    <property type="evidence" value="ECO:0000266"/>
    <property type="project" value="RGD"/>
</dbReference>
<dbReference type="GO" id="GO:0005789">
    <property type="term" value="C:endoplasmic reticulum membrane"/>
    <property type="evidence" value="ECO:0000266"/>
    <property type="project" value="RGD"/>
</dbReference>
<dbReference type="GO" id="GO:0019898">
    <property type="term" value="C:extrinsic component of membrane"/>
    <property type="evidence" value="ECO:0000303"/>
    <property type="project" value="RGD"/>
</dbReference>
<dbReference type="GO" id="GO:0042587">
    <property type="term" value="C:glycogen granule"/>
    <property type="evidence" value="ECO:0000266"/>
    <property type="project" value="RGD"/>
</dbReference>
<dbReference type="GO" id="GO:0005635">
    <property type="term" value="C:nuclear envelope"/>
    <property type="evidence" value="ECO:0000314"/>
    <property type="project" value="RGD"/>
</dbReference>
<dbReference type="GO" id="GO:0005634">
    <property type="term" value="C:nucleus"/>
    <property type="evidence" value="ECO:0000314"/>
    <property type="project" value="UniProtKB"/>
</dbReference>
<dbReference type="GO" id="GO:0005516">
    <property type="term" value="F:calmodulin binding"/>
    <property type="evidence" value="ECO:0000314"/>
    <property type="project" value="RGD"/>
</dbReference>
<dbReference type="GO" id="GO:0004105">
    <property type="term" value="F:choline-phosphate cytidylyltransferase activity"/>
    <property type="evidence" value="ECO:0000314"/>
    <property type="project" value="UniProtKB"/>
</dbReference>
<dbReference type="GO" id="GO:0042802">
    <property type="term" value="F:identical protein binding"/>
    <property type="evidence" value="ECO:0000266"/>
    <property type="project" value="RGD"/>
</dbReference>
<dbReference type="GO" id="GO:0008289">
    <property type="term" value="F:lipid binding"/>
    <property type="evidence" value="ECO:0000315"/>
    <property type="project" value="RGD"/>
</dbReference>
<dbReference type="GO" id="GO:0140678">
    <property type="term" value="F:molecular function inhibitor activity"/>
    <property type="evidence" value="ECO:0000314"/>
    <property type="project" value="DisProt"/>
</dbReference>
<dbReference type="GO" id="GO:0031210">
    <property type="term" value="F:phosphatidylcholine binding"/>
    <property type="evidence" value="ECO:0000314"/>
    <property type="project" value="RGD"/>
</dbReference>
<dbReference type="GO" id="GO:0042803">
    <property type="term" value="F:protein homodimerization activity"/>
    <property type="evidence" value="ECO:0000353"/>
    <property type="project" value="UniProtKB"/>
</dbReference>
<dbReference type="GO" id="GO:0042100">
    <property type="term" value="P:B cell proliferation"/>
    <property type="evidence" value="ECO:0000250"/>
    <property type="project" value="UniProtKB"/>
</dbReference>
<dbReference type="GO" id="GO:0006657">
    <property type="term" value="P:CDP-choline pathway"/>
    <property type="evidence" value="ECO:0000314"/>
    <property type="project" value="UniProtKB"/>
</dbReference>
<dbReference type="GO" id="GO:0045190">
    <property type="term" value="P:isotype switching"/>
    <property type="evidence" value="ECO:0000250"/>
    <property type="project" value="UniProtKB"/>
</dbReference>
<dbReference type="GO" id="GO:0006656">
    <property type="term" value="P:phosphatidylcholine biosynthetic process"/>
    <property type="evidence" value="ECO:0000314"/>
    <property type="project" value="UniProtKB"/>
</dbReference>
<dbReference type="CDD" id="cd02174">
    <property type="entry name" value="CCT"/>
    <property type="match status" value="1"/>
</dbReference>
<dbReference type="DisProt" id="DP02118"/>
<dbReference type="FunFam" id="3.40.50.620:FF:000016">
    <property type="entry name" value="Putative choline-phosphate cytidylyltransferase B"/>
    <property type="match status" value="1"/>
</dbReference>
<dbReference type="Gene3D" id="3.40.50.620">
    <property type="entry name" value="HUPs"/>
    <property type="match status" value="1"/>
</dbReference>
<dbReference type="InterPro" id="IPR041723">
    <property type="entry name" value="CCT"/>
</dbReference>
<dbReference type="InterPro" id="IPR004821">
    <property type="entry name" value="Cyt_trans-like"/>
</dbReference>
<dbReference type="InterPro" id="IPR045049">
    <property type="entry name" value="Pcy1-like"/>
</dbReference>
<dbReference type="InterPro" id="IPR014729">
    <property type="entry name" value="Rossmann-like_a/b/a_fold"/>
</dbReference>
<dbReference type="NCBIfam" id="TIGR00125">
    <property type="entry name" value="cyt_tran_rel"/>
    <property type="match status" value="1"/>
</dbReference>
<dbReference type="PANTHER" id="PTHR10739:SF19">
    <property type="entry name" value="CHOLINE-PHOSPHATE CYTIDYLYLTRANSFERASE A"/>
    <property type="match status" value="1"/>
</dbReference>
<dbReference type="PANTHER" id="PTHR10739">
    <property type="entry name" value="CYTIDYLYLTRANSFERASE"/>
    <property type="match status" value="1"/>
</dbReference>
<dbReference type="Pfam" id="PF01467">
    <property type="entry name" value="CTP_transf_like"/>
    <property type="match status" value="1"/>
</dbReference>
<dbReference type="SUPFAM" id="SSF52374">
    <property type="entry name" value="Nucleotidylyl transferase"/>
    <property type="match status" value="1"/>
</dbReference>
<protein>
    <recommendedName>
        <fullName>Choline-phosphate cytidylyltransferase A</fullName>
        <ecNumber evidence="4 5 6 7 8 10 11">2.7.7.15</ecNumber>
    </recommendedName>
    <alternativeName>
        <fullName>CCT-alpha</fullName>
    </alternativeName>
    <alternativeName>
        <fullName>CTP:phosphocholine cytidylyltransferase A</fullName>
        <shortName>CCT A</shortName>
        <shortName>CT A</shortName>
    </alternativeName>
    <alternativeName>
        <fullName>Phosphorylcholine transferase A</fullName>
    </alternativeName>
</protein>
<feature type="chain" id="PRO_0000208455" description="Choline-phosphate cytidylyltransferase A">
    <location>
        <begin position="1"/>
        <end position="367"/>
    </location>
</feature>
<feature type="repeat" description="1">
    <location>
        <begin position="319"/>
        <end position="324"/>
    </location>
</feature>
<feature type="repeat" description="2; approximate">
    <location>
        <begin position="329"/>
        <end position="333"/>
    </location>
</feature>
<feature type="repeat" description="3">
    <location>
        <begin position="343"/>
        <end position="348"/>
    </location>
</feature>
<feature type="region of interest" description="Disordered" evidence="3">
    <location>
        <begin position="1"/>
        <end position="31"/>
    </location>
</feature>
<feature type="region of interest" description="Amphipathic" evidence="14">
    <location>
        <begin position="228"/>
        <end position="287"/>
    </location>
</feature>
<feature type="region of interest" description="Autoinhibitory (AI)" evidence="14">
    <location>
        <begin position="272"/>
        <end position="293"/>
    </location>
</feature>
<feature type="region of interest" description="Amphipathic" evidence="14">
    <location>
        <begin position="298"/>
        <end position="315"/>
    </location>
</feature>
<feature type="region of interest" description="Disordered" evidence="3">
    <location>
        <begin position="313"/>
        <end position="367"/>
    </location>
</feature>
<feature type="region of interest" description="3 X repeats">
    <location>
        <begin position="319"/>
        <end position="348"/>
    </location>
</feature>
<feature type="compositionally biased region" description="Polar residues" evidence="3">
    <location>
        <begin position="315"/>
        <end position="324"/>
    </location>
</feature>
<feature type="compositionally biased region" description="Low complexity" evidence="3">
    <location>
        <begin position="330"/>
        <end position="352"/>
    </location>
</feature>
<feature type="binding site" evidence="13 14 15 16 17">
    <location>
        <position position="84"/>
    </location>
    <ligand>
        <name>CTP</name>
        <dbReference type="ChEBI" id="CHEBI:37563"/>
    </ligand>
</feature>
<feature type="binding site" evidence="13 14 15 16 17">
    <location>
        <position position="85"/>
    </location>
    <ligand>
        <name>CTP</name>
        <dbReference type="ChEBI" id="CHEBI:37563"/>
    </ligand>
</feature>
<feature type="binding site" evidence="5 15 16 17">
    <location>
        <position position="92"/>
    </location>
    <ligand>
        <name>CTP</name>
        <dbReference type="ChEBI" id="CHEBI:37563"/>
    </ligand>
</feature>
<feature type="binding site" evidence="5 15 16">
    <location>
        <position position="122"/>
    </location>
    <ligand>
        <name>CTP</name>
        <dbReference type="ChEBI" id="CHEBI:37563"/>
    </ligand>
</feature>
<feature type="binding site" evidence="13 14 15 16">
    <location>
        <position position="122"/>
    </location>
    <ligand>
        <name>phosphocholine</name>
        <dbReference type="ChEBI" id="CHEBI:295975"/>
    </ligand>
</feature>
<feature type="binding site" evidence="13 14 15">
    <location>
        <position position="151"/>
    </location>
    <ligand>
        <name>phosphocholine</name>
        <dbReference type="ChEBI" id="CHEBI:295975"/>
    </ligand>
</feature>
<feature type="binding site" evidence="13 14 15 16">
    <location>
        <position position="168"/>
    </location>
    <ligand>
        <name>CTP</name>
        <dbReference type="ChEBI" id="CHEBI:37563"/>
    </ligand>
</feature>
<feature type="binding site" evidence="13 14 15 16">
    <location>
        <position position="169"/>
    </location>
    <ligand>
        <name>CTP</name>
        <dbReference type="ChEBI" id="CHEBI:37563"/>
    </ligand>
</feature>
<feature type="binding site" evidence="13 14 15 16">
    <location>
        <position position="173"/>
    </location>
    <ligand>
        <name>CTP</name>
        <dbReference type="ChEBI" id="CHEBI:37563"/>
    </ligand>
</feature>
<feature type="binding site" evidence="13 14 15 16 17">
    <location>
        <position position="195"/>
    </location>
    <ligand>
        <name>CTP</name>
        <dbReference type="ChEBI" id="CHEBI:37563"/>
    </ligand>
</feature>
<feature type="binding site" evidence="13 14 15 16 17">
    <location>
        <position position="196"/>
    </location>
    <ligand>
        <name>CTP</name>
        <dbReference type="ChEBI" id="CHEBI:37563"/>
    </ligand>
</feature>
<feature type="binding site" evidence="13 14 15 16 17">
    <location>
        <position position="197"/>
    </location>
    <ligand>
        <name>CTP</name>
        <dbReference type="ChEBI" id="CHEBI:37563"/>
    </ligand>
</feature>
<feature type="binding site" evidence="13 14 15 16 17">
    <location>
        <position position="200"/>
    </location>
    <ligand>
        <name>CTP</name>
        <dbReference type="ChEBI" id="CHEBI:37563"/>
    </ligand>
</feature>
<feature type="modified residue" description="N-acetylmethionine" evidence="1">
    <location>
        <position position="1"/>
    </location>
</feature>
<feature type="modified residue" description="N6-acetyllysine" evidence="1">
    <location>
        <position position="8"/>
    </location>
</feature>
<feature type="modified residue" description="Phosphoserine" evidence="1">
    <location>
        <position position="233"/>
    </location>
</feature>
<feature type="modified residue" description="Phosphoserine; by PKC" evidence="9">
    <location>
        <position position="315"/>
    </location>
</feature>
<feature type="modified residue" description="Phosphoserine" evidence="9 18">
    <location>
        <position position="319"/>
    </location>
</feature>
<feature type="modified residue" description="Phosphoserine" evidence="9">
    <location>
        <position position="321"/>
    </location>
</feature>
<feature type="modified residue" description="Phosphoserine" evidence="9">
    <location>
        <position position="322"/>
    </location>
</feature>
<feature type="modified residue" description="Phosphoserine" evidence="9">
    <location>
        <position position="323"/>
    </location>
</feature>
<feature type="modified residue" description="Phosphothreonine" evidence="2">
    <location>
        <position position="325"/>
    </location>
</feature>
<feature type="modified residue" description="Phosphoserine" evidence="9">
    <location>
        <position position="329"/>
    </location>
</feature>
<feature type="modified residue" description="Phosphoserine" evidence="9 18">
    <location>
        <position position="331"/>
    </location>
</feature>
<feature type="modified residue" description="Phosphoserine; by PKC" evidence="9">
    <location>
        <position position="333"/>
    </location>
</feature>
<feature type="modified residue" description="Phosphothreonine" evidence="18">
    <location>
        <position position="342"/>
    </location>
</feature>
<feature type="modified residue" description="Phosphoserine" evidence="9">
    <location>
        <position position="343"/>
    </location>
</feature>
<feature type="modified residue" description="Phosphoserine" evidence="9">
    <location>
        <position position="345"/>
    </location>
</feature>
<feature type="modified residue" description="Phosphoserine" evidence="9">
    <location>
        <position position="346"/>
    </location>
</feature>
<feature type="modified residue" description="Phosphoserine" evidence="9 18">
    <location>
        <position position="347"/>
    </location>
</feature>
<feature type="modified residue" description="Phosphoserine" evidence="9">
    <location>
        <position position="350"/>
    </location>
</feature>
<feature type="modified residue" description="Phosphoserine" evidence="9">
    <location>
        <position position="352"/>
    </location>
</feature>
<feature type="modified residue" description="Phosphothreonine" evidence="2">
    <location>
        <position position="358"/>
    </location>
</feature>
<feature type="modified residue" description="Phosphoserine; by CK2" evidence="9 18">
    <location>
        <position position="362"/>
    </location>
</feature>
<feature type="mutagenesis site" description="Nearly abolishes enzyme activity. Decreases affinity for phosphocholine about 500-fold." evidence="4">
    <original>K</original>
    <variation>A</variation>
    <location>
        <position position="122"/>
    </location>
</feature>
<feature type="mutagenesis site" description="Nearly abolishes enzyme activity. Decreases affinity for phosphocholine about 80-fold." evidence="4">
    <original>K</original>
    <variation>R</variation>
    <location>
        <position position="122"/>
    </location>
</feature>
<feature type="mutagenesis site" description="Strongly reduced catalytic activity." evidence="5">
    <original>H</original>
    <variation>A</variation>
    <location>
        <position position="168"/>
    </location>
</feature>
<feature type="mutagenesis site" description="Reduced catalytic activity. Reduces affinity for phosphocholine." evidence="5">
    <original>Y</original>
    <variation>A</variation>
    <location>
        <position position="173"/>
    </location>
</feature>
<feature type="mutagenesis site" description="No loss of enzyme activity and nuclear localization." evidence="10">
    <original>S</original>
    <variation>A</variation>
    <variation>C</variation>
    <location>
        <position position="362"/>
    </location>
</feature>
<feature type="sequence conflict" description="In Ref. 1; AAA40995." evidence="12" ref="1">
    <original>G</original>
    <variation>S</variation>
    <location>
        <position position="91"/>
    </location>
</feature>
<feature type="sequence conflict" description="In Ref. 1; AAA40995." evidence="12" ref="1">
    <original>S</original>
    <variation>C</variation>
    <location>
        <position position="114"/>
    </location>
</feature>
<feature type="sequence conflict" description="In Ref. 2; AAB60489." evidence="12" ref="2">
    <original>EL</original>
    <variation>DV</variation>
    <location>
        <begin position="116"/>
        <end position="117"/>
    </location>
</feature>
<feature type="helix" evidence="21">
    <location>
        <begin position="48"/>
        <end position="50"/>
    </location>
</feature>
<feature type="strand" evidence="22">
    <location>
        <begin position="55"/>
        <end position="57"/>
    </location>
</feature>
<feature type="helix" evidence="21">
    <location>
        <begin position="64"/>
        <end position="69"/>
    </location>
</feature>
<feature type="strand" evidence="22">
    <location>
        <begin position="73"/>
        <end position="75"/>
    </location>
</feature>
<feature type="strand" evidence="21">
    <location>
        <begin position="77"/>
        <end position="83"/>
    </location>
</feature>
<feature type="helix" evidence="21">
    <location>
        <begin position="90"/>
        <end position="100"/>
    </location>
</feature>
<feature type="strand" evidence="21">
    <location>
        <begin position="102"/>
        <end position="112"/>
    </location>
</feature>
<feature type="helix" evidence="21">
    <location>
        <begin position="115"/>
        <end position="121"/>
    </location>
</feature>
<feature type="helix" evidence="21">
    <location>
        <begin position="129"/>
        <end position="137"/>
    </location>
</feature>
<feature type="strand" evidence="22">
    <location>
        <begin position="139"/>
        <end position="141"/>
    </location>
</feature>
<feature type="strand" evidence="21">
    <location>
        <begin position="143"/>
        <end position="148"/>
    </location>
</feature>
<feature type="helix" evidence="21">
    <location>
        <begin position="155"/>
        <end position="160"/>
    </location>
</feature>
<feature type="strand" evidence="21">
    <location>
        <begin position="165"/>
        <end position="171"/>
    </location>
</feature>
<feature type="helix" evidence="21">
    <location>
        <begin position="183"/>
        <end position="187"/>
    </location>
</feature>
<feature type="strand" evidence="21">
    <location>
        <begin position="191"/>
        <end position="194"/>
    </location>
</feature>
<feature type="helix" evidence="21">
    <location>
        <begin position="202"/>
        <end position="214"/>
    </location>
</feature>
<feature type="turn" evidence="19">
    <location>
        <begin position="238"/>
        <end position="240"/>
    </location>
</feature>
<feature type="strand" evidence="19">
    <location>
        <begin position="243"/>
        <end position="245"/>
    </location>
</feature>
<feature type="helix" evidence="19">
    <location>
        <begin position="248"/>
        <end position="252"/>
    </location>
</feature>
<feature type="helix" evidence="19">
    <location>
        <begin position="255"/>
        <end position="257"/>
    </location>
</feature>
<feature type="turn" evidence="19">
    <location>
        <begin position="258"/>
        <end position="260"/>
    </location>
</feature>
<feature type="helix" evidence="19">
    <location>
        <begin position="261"/>
        <end position="267"/>
    </location>
</feature>
<feature type="helix" evidence="20">
    <location>
        <begin position="270"/>
        <end position="274"/>
    </location>
</feature>
<feature type="helix" evidence="22">
    <location>
        <begin position="276"/>
        <end position="291"/>
    </location>
</feature>